<accession>Q8ZJ73</accession>
<accession>Q0WK57</accession>
<accession>Q74XL3</accession>
<accession>Q7CKS9</accession>
<gene>
    <name evidence="1" type="primary">actP</name>
    <name type="ordered locus">YPO0251</name>
    <name type="ordered locus">y0508</name>
    <name type="ordered locus">YP_0404</name>
</gene>
<feature type="chain" id="PRO_0000105416" description="Cation/acetate symporter ActP">
    <location>
        <begin position="1"/>
        <end position="551"/>
    </location>
</feature>
<feature type="transmembrane region" description="Helical" evidence="1">
    <location>
        <begin position="34"/>
        <end position="56"/>
    </location>
</feature>
<feature type="transmembrane region" description="Helical" evidence="1">
    <location>
        <begin position="77"/>
        <end position="99"/>
    </location>
</feature>
<feature type="transmembrane region" description="Helical" evidence="1">
    <location>
        <begin position="104"/>
        <end position="126"/>
    </location>
</feature>
<feature type="transmembrane region" description="Helical" evidence="1">
    <location>
        <begin position="147"/>
        <end position="169"/>
    </location>
</feature>
<feature type="transmembrane region" description="Helical" evidence="1">
    <location>
        <begin position="179"/>
        <end position="201"/>
    </location>
</feature>
<feature type="transmembrane region" description="Helical" evidence="1">
    <location>
        <begin position="206"/>
        <end position="228"/>
    </location>
</feature>
<feature type="transmembrane region" description="Helical" evidence="1">
    <location>
        <begin position="265"/>
        <end position="287"/>
    </location>
</feature>
<feature type="transmembrane region" description="Helical" evidence="1">
    <location>
        <begin position="300"/>
        <end position="322"/>
    </location>
</feature>
<feature type="transmembrane region" description="Helical" evidence="1">
    <location>
        <begin position="363"/>
        <end position="385"/>
    </location>
</feature>
<feature type="transmembrane region" description="Helical" evidence="1">
    <location>
        <begin position="406"/>
        <end position="425"/>
    </location>
</feature>
<feature type="transmembrane region" description="Helical" evidence="1">
    <location>
        <begin position="430"/>
        <end position="452"/>
    </location>
</feature>
<feature type="transmembrane region" description="Helical" evidence="1">
    <location>
        <begin position="465"/>
        <end position="487"/>
    </location>
</feature>
<feature type="transmembrane region" description="Helical" evidence="1">
    <location>
        <begin position="502"/>
        <end position="519"/>
    </location>
</feature>
<sequence>MKIRHWSALSLFVLPALAQAEALTGEVHRQPLNIQAIVMFLLFVGGTLYITYWASKRTRSRQDYYTAGGRITGFQNGLAIAGDYMSAASFLGISALVYASGYDGLIYSIGFLIGWPIILFLIAERLRNLGRYTFADVASYRLQQRPIRTLSACGSLVVVALYLIAQMVGAGKLIQLLFGLNYHVAVVLVGILMVLYVLFGGMLATTWVQIIKAVMLLSGATFMAIMVMKSVNFNFNTLFSEAVKVHPKGLSIMSPGGLVSDPISALSLGLALMFGTAGLPHILMRFFTVSDAKEARKSVFYATGFIGYFYILTFIIGFGAILLVGPNQTFKDAAGALLGGNNMAAVHLANAVGGSFFLGFISAVAFATILAVVAGLTLAGASAVSHDLYASVIKKGKANERDELRVSKITVIILGIVAIGLGILFENQNIAFMVGLAFSIAASCNFPIIIISMYWDKLTTRGAMIGGWLGLSTAVILMILGPTIWVTILGHEKPIYPYEYPALFSMIAAFVGTWFFSITDNSETGKQERLLFKSQFVRSQTGLGASKGGAH</sequence>
<comment type="function">
    <text evidence="1">Transports acetate.</text>
</comment>
<comment type="subcellular location">
    <subcellularLocation>
        <location evidence="1">Cell inner membrane</location>
        <topology evidence="1">Multi-pass membrane protein</topology>
    </subcellularLocation>
</comment>
<comment type="similarity">
    <text evidence="1">Belongs to the sodium:solute symporter (SSF) (TC 2.A.21) family.</text>
</comment>
<name>ACTP_YERPE</name>
<proteinExistence type="inferred from homology"/>
<evidence type="ECO:0000255" key="1">
    <source>
        <dbReference type="HAMAP-Rule" id="MF_01426"/>
    </source>
</evidence>
<organism>
    <name type="scientific">Yersinia pestis</name>
    <dbReference type="NCBI Taxonomy" id="632"/>
    <lineage>
        <taxon>Bacteria</taxon>
        <taxon>Pseudomonadati</taxon>
        <taxon>Pseudomonadota</taxon>
        <taxon>Gammaproteobacteria</taxon>
        <taxon>Enterobacterales</taxon>
        <taxon>Yersiniaceae</taxon>
        <taxon>Yersinia</taxon>
    </lineage>
</organism>
<reference key="1">
    <citation type="journal article" date="2001" name="Nature">
        <title>Genome sequence of Yersinia pestis, the causative agent of plague.</title>
        <authorList>
            <person name="Parkhill J."/>
            <person name="Wren B.W."/>
            <person name="Thomson N.R."/>
            <person name="Titball R.W."/>
            <person name="Holden M.T.G."/>
            <person name="Prentice M.B."/>
            <person name="Sebaihia M."/>
            <person name="James K.D."/>
            <person name="Churcher C.M."/>
            <person name="Mungall K.L."/>
            <person name="Baker S."/>
            <person name="Basham D."/>
            <person name="Bentley S.D."/>
            <person name="Brooks K."/>
            <person name="Cerdeno-Tarraga A.-M."/>
            <person name="Chillingworth T."/>
            <person name="Cronin A."/>
            <person name="Davies R.M."/>
            <person name="Davis P."/>
            <person name="Dougan G."/>
            <person name="Feltwell T."/>
            <person name="Hamlin N."/>
            <person name="Holroyd S."/>
            <person name="Jagels K."/>
            <person name="Karlyshev A.V."/>
            <person name="Leather S."/>
            <person name="Moule S."/>
            <person name="Oyston P.C.F."/>
            <person name="Quail M.A."/>
            <person name="Rutherford K.M."/>
            <person name="Simmonds M."/>
            <person name="Skelton J."/>
            <person name="Stevens K."/>
            <person name="Whitehead S."/>
            <person name="Barrell B.G."/>
        </authorList>
    </citation>
    <scope>NUCLEOTIDE SEQUENCE [LARGE SCALE GENOMIC DNA]</scope>
    <source>
        <strain>CO-92 / Biovar Orientalis</strain>
    </source>
</reference>
<reference key="2">
    <citation type="journal article" date="2002" name="J. Bacteriol.">
        <title>Genome sequence of Yersinia pestis KIM.</title>
        <authorList>
            <person name="Deng W."/>
            <person name="Burland V."/>
            <person name="Plunkett G. III"/>
            <person name="Boutin A."/>
            <person name="Mayhew G.F."/>
            <person name="Liss P."/>
            <person name="Perna N.T."/>
            <person name="Rose D.J."/>
            <person name="Mau B."/>
            <person name="Zhou S."/>
            <person name="Schwartz D.C."/>
            <person name="Fetherston J.D."/>
            <person name="Lindler L.E."/>
            <person name="Brubaker R.R."/>
            <person name="Plano G.V."/>
            <person name="Straley S.C."/>
            <person name="McDonough K.A."/>
            <person name="Nilles M.L."/>
            <person name="Matson J.S."/>
            <person name="Blattner F.R."/>
            <person name="Perry R.D."/>
        </authorList>
    </citation>
    <scope>NUCLEOTIDE SEQUENCE [LARGE SCALE GENOMIC DNA]</scope>
    <source>
        <strain>KIM10+ / Biovar Mediaevalis</strain>
    </source>
</reference>
<reference key="3">
    <citation type="journal article" date="2004" name="DNA Res.">
        <title>Complete genome sequence of Yersinia pestis strain 91001, an isolate avirulent to humans.</title>
        <authorList>
            <person name="Song Y."/>
            <person name="Tong Z."/>
            <person name="Wang J."/>
            <person name="Wang L."/>
            <person name="Guo Z."/>
            <person name="Han Y."/>
            <person name="Zhang J."/>
            <person name="Pei D."/>
            <person name="Zhou D."/>
            <person name="Qin H."/>
            <person name="Pang X."/>
            <person name="Han Y."/>
            <person name="Zhai J."/>
            <person name="Li M."/>
            <person name="Cui B."/>
            <person name="Qi Z."/>
            <person name="Jin L."/>
            <person name="Dai R."/>
            <person name="Chen F."/>
            <person name="Li S."/>
            <person name="Ye C."/>
            <person name="Du Z."/>
            <person name="Lin W."/>
            <person name="Wang J."/>
            <person name="Yu J."/>
            <person name="Yang H."/>
            <person name="Wang J."/>
            <person name="Huang P."/>
            <person name="Yang R."/>
        </authorList>
    </citation>
    <scope>NUCLEOTIDE SEQUENCE [LARGE SCALE GENOMIC DNA]</scope>
    <source>
        <strain>91001 / Biovar Mediaevalis</strain>
    </source>
</reference>
<protein>
    <recommendedName>
        <fullName evidence="1">Cation/acetate symporter ActP</fullName>
    </recommendedName>
    <alternativeName>
        <fullName evidence="1">Acetate permease</fullName>
    </alternativeName>
    <alternativeName>
        <fullName evidence="1">Acetate transporter ActP</fullName>
    </alternativeName>
</protein>
<dbReference type="EMBL" id="AL590842">
    <property type="protein sequence ID" value="CAL18935.1"/>
    <property type="molecule type" value="Genomic_DNA"/>
</dbReference>
<dbReference type="EMBL" id="AE009952">
    <property type="protein sequence ID" value="AAM84097.1"/>
    <property type="molecule type" value="Genomic_DNA"/>
</dbReference>
<dbReference type="EMBL" id="AE017042">
    <property type="protein sequence ID" value="AAS60675.1"/>
    <property type="molecule type" value="Genomic_DNA"/>
</dbReference>
<dbReference type="PIR" id="AE0031">
    <property type="entry name" value="AE0031"/>
</dbReference>
<dbReference type="RefSeq" id="WP_002209029.1">
    <property type="nucleotide sequence ID" value="NZ_WUCM01000074.1"/>
</dbReference>
<dbReference type="RefSeq" id="YP_002345331.1">
    <property type="nucleotide sequence ID" value="NC_003143.1"/>
</dbReference>
<dbReference type="SMR" id="Q8ZJ73"/>
<dbReference type="IntAct" id="Q8ZJ73">
    <property type="interactions" value="4"/>
</dbReference>
<dbReference type="STRING" id="214092.YPO0251"/>
<dbReference type="PaxDb" id="214092-YPO0251"/>
<dbReference type="DNASU" id="1145455"/>
<dbReference type="EnsemblBacteria" id="AAS60675">
    <property type="protein sequence ID" value="AAS60675"/>
    <property type="gene ID" value="YP_0404"/>
</dbReference>
<dbReference type="GeneID" id="57974352"/>
<dbReference type="KEGG" id="ype:YPO0251"/>
<dbReference type="KEGG" id="ypk:y0508"/>
<dbReference type="KEGG" id="ypm:YP_0404"/>
<dbReference type="PATRIC" id="fig|1028802.3.peg.1368"/>
<dbReference type="eggNOG" id="COG4147">
    <property type="taxonomic scope" value="Bacteria"/>
</dbReference>
<dbReference type="HOGENOM" id="CLU_018808_8_3_6"/>
<dbReference type="OMA" id="GTTWVQM"/>
<dbReference type="OrthoDB" id="9764416at2"/>
<dbReference type="Proteomes" id="UP000000815">
    <property type="component" value="Chromosome"/>
</dbReference>
<dbReference type="Proteomes" id="UP000001019">
    <property type="component" value="Chromosome"/>
</dbReference>
<dbReference type="Proteomes" id="UP000002490">
    <property type="component" value="Chromosome"/>
</dbReference>
<dbReference type="GO" id="GO:0005886">
    <property type="term" value="C:plasma membrane"/>
    <property type="evidence" value="ECO:0000318"/>
    <property type="project" value="GO_Central"/>
</dbReference>
<dbReference type="GO" id="GO:0015123">
    <property type="term" value="F:acetate transmembrane transporter activity"/>
    <property type="evidence" value="ECO:0000318"/>
    <property type="project" value="GO_Central"/>
</dbReference>
<dbReference type="GO" id="GO:0043879">
    <property type="term" value="F:glycolate transmembrane transporter activity"/>
    <property type="evidence" value="ECO:0007669"/>
    <property type="project" value="InterPro"/>
</dbReference>
<dbReference type="GO" id="GO:0015293">
    <property type="term" value="F:symporter activity"/>
    <property type="evidence" value="ECO:0007669"/>
    <property type="project" value="UniProtKB-KW"/>
</dbReference>
<dbReference type="GO" id="GO:0006847">
    <property type="term" value="P:plasma membrane acetate transport"/>
    <property type="evidence" value="ECO:0000318"/>
    <property type="project" value="GO_Central"/>
</dbReference>
<dbReference type="GO" id="GO:0006814">
    <property type="term" value="P:sodium ion transport"/>
    <property type="evidence" value="ECO:0007669"/>
    <property type="project" value="UniProtKB-KW"/>
</dbReference>
<dbReference type="CDD" id="cd11480">
    <property type="entry name" value="SLC5sbd_u4"/>
    <property type="match status" value="1"/>
</dbReference>
<dbReference type="FunFam" id="1.20.1730.10:FF:000001">
    <property type="entry name" value="Cation/acetate symporter ActP"/>
    <property type="match status" value="1"/>
</dbReference>
<dbReference type="Gene3D" id="1.20.1730.10">
    <property type="entry name" value="Sodium/glucose cotransporter"/>
    <property type="match status" value="1"/>
</dbReference>
<dbReference type="HAMAP" id="MF_01426">
    <property type="entry name" value="Acet_symport_ActP"/>
    <property type="match status" value="1"/>
</dbReference>
<dbReference type="InterPro" id="IPR014083">
    <property type="entry name" value="Cation/Ac_symporter_ActP"/>
</dbReference>
<dbReference type="InterPro" id="IPR038377">
    <property type="entry name" value="Na/Glc_symporter_sf"/>
</dbReference>
<dbReference type="InterPro" id="IPR001734">
    <property type="entry name" value="Na/solute_symporter"/>
</dbReference>
<dbReference type="InterPro" id="IPR018212">
    <property type="entry name" value="Na/solute_symporter_CS"/>
</dbReference>
<dbReference type="InterPro" id="IPR050277">
    <property type="entry name" value="Sodium:Solute_Symporter"/>
</dbReference>
<dbReference type="NCBIfam" id="NF006903">
    <property type="entry name" value="PRK09395.1"/>
    <property type="match status" value="1"/>
</dbReference>
<dbReference type="NCBIfam" id="NF009135">
    <property type="entry name" value="PRK12488.1"/>
    <property type="match status" value="1"/>
</dbReference>
<dbReference type="NCBIfam" id="TIGR00813">
    <property type="entry name" value="sss"/>
    <property type="match status" value="1"/>
</dbReference>
<dbReference type="NCBIfam" id="TIGR02711">
    <property type="entry name" value="symport_actP"/>
    <property type="match status" value="1"/>
</dbReference>
<dbReference type="PANTHER" id="PTHR48086:SF6">
    <property type="entry name" value="CATION_ACETATE SYMPORTER ACTP"/>
    <property type="match status" value="1"/>
</dbReference>
<dbReference type="PANTHER" id="PTHR48086">
    <property type="entry name" value="SODIUM/PROLINE SYMPORTER-RELATED"/>
    <property type="match status" value="1"/>
</dbReference>
<dbReference type="Pfam" id="PF00474">
    <property type="entry name" value="SSF"/>
    <property type="match status" value="1"/>
</dbReference>
<dbReference type="PROSITE" id="PS00456">
    <property type="entry name" value="NA_SOLUT_SYMP_1"/>
    <property type="match status" value="1"/>
</dbReference>
<dbReference type="PROSITE" id="PS50283">
    <property type="entry name" value="NA_SOLUT_SYMP_3"/>
    <property type="match status" value="1"/>
</dbReference>
<keyword id="KW-0997">Cell inner membrane</keyword>
<keyword id="KW-1003">Cell membrane</keyword>
<keyword id="KW-0406">Ion transport</keyword>
<keyword id="KW-0472">Membrane</keyword>
<keyword id="KW-1185">Reference proteome</keyword>
<keyword id="KW-0915">Sodium</keyword>
<keyword id="KW-0739">Sodium transport</keyword>
<keyword id="KW-0769">Symport</keyword>
<keyword id="KW-0812">Transmembrane</keyword>
<keyword id="KW-1133">Transmembrane helix</keyword>
<keyword id="KW-0813">Transport</keyword>